<accession>Q664Q8</accession>
<comment type="similarity">
    <text evidence="1">Belongs to the SlyX family.</text>
</comment>
<feature type="chain" id="PRO_0000227089" description="Protein SlyX">
    <location>
        <begin position="1"/>
        <end position="72"/>
    </location>
</feature>
<feature type="region of interest" description="Disordered" evidence="2">
    <location>
        <begin position="52"/>
        <end position="72"/>
    </location>
</feature>
<feature type="compositionally biased region" description="Polar residues" evidence="2">
    <location>
        <begin position="55"/>
        <end position="65"/>
    </location>
</feature>
<protein>
    <recommendedName>
        <fullName evidence="1">Protein SlyX</fullName>
    </recommendedName>
</protein>
<sequence>MEQSLLEQRLEMLESRLAFQEVTIEELNLIVTEHQMEMTKLREHLRLLTDKLRESQSSMLASPSEETPPPHY</sequence>
<name>SLYX_YERPS</name>
<proteinExistence type="inferred from homology"/>
<gene>
    <name evidence="1" type="primary">slyX</name>
    <name type="ordered locus">YPTB3711</name>
</gene>
<reference key="1">
    <citation type="journal article" date="2004" name="Proc. Natl. Acad. Sci. U.S.A.">
        <title>Insights into the evolution of Yersinia pestis through whole-genome comparison with Yersinia pseudotuberculosis.</title>
        <authorList>
            <person name="Chain P.S.G."/>
            <person name="Carniel E."/>
            <person name="Larimer F.W."/>
            <person name="Lamerdin J."/>
            <person name="Stoutland P.O."/>
            <person name="Regala W.M."/>
            <person name="Georgescu A.M."/>
            <person name="Vergez L.M."/>
            <person name="Land M.L."/>
            <person name="Motin V.L."/>
            <person name="Brubaker R.R."/>
            <person name="Fowler J."/>
            <person name="Hinnebusch J."/>
            <person name="Marceau M."/>
            <person name="Medigue C."/>
            <person name="Simonet M."/>
            <person name="Chenal-Francisque V."/>
            <person name="Souza B."/>
            <person name="Dacheux D."/>
            <person name="Elliott J.M."/>
            <person name="Derbise A."/>
            <person name="Hauser L.J."/>
            <person name="Garcia E."/>
        </authorList>
    </citation>
    <scope>NUCLEOTIDE SEQUENCE [LARGE SCALE GENOMIC DNA]</scope>
    <source>
        <strain>IP32953</strain>
    </source>
</reference>
<organism>
    <name type="scientific">Yersinia pseudotuberculosis serotype I (strain IP32953)</name>
    <dbReference type="NCBI Taxonomy" id="273123"/>
    <lineage>
        <taxon>Bacteria</taxon>
        <taxon>Pseudomonadati</taxon>
        <taxon>Pseudomonadota</taxon>
        <taxon>Gammaproteobacteria</taxon>
        <taxon>Enterobacterales</taxon>
        <taxon>Yersiniaceae</taxon>
        <taxon>Yersinia</taxon>
    </lineage>
</organism>
<evidence type="ECO:0000255" key="1">
    <source>
        <dbReference type="HAMAP-Rule" id="MF_00715"/>
    </source>
</evidence>
<evidence type="ECO:0000256" key="2">
    <source>
        <dbReference type="SAM" id="MobiDB-lite"/>
    </source>
</evidence>
<dbReference type="EMBL" id="BX936398">
    <property type="protein sequence ID" value="CAH22949.1"/>
    <property type="molecule type" value="Genomic_DNA"/>
</dbReference>
<dbReference type="RefSeq" id="WP_002212317.1">
    <property type="nucleotide sequence ID" value="NZ_CP009712.1"/>
</dbReference>
<dbReference type="SMR" id="Q664Q8"/>
<dbReference type="KEGG" id="ypo:BZ17_2876"/>
<dbReference type="KEGG" id="yps:YPTB3711"/>
<dbReference type="PATRIC" id="fig|273123.14.peg.3017"/>
<dbReference type="Proteomes" id="UP000001011">
    <property type="component" value="Chromosome"/>
</dbReference>
<dbReference type="Gene3D" id="1.20.5.300">
    <property type="match status" value="1"/>
</dbReference>
<dbReference type="HAMAP" id="MF_00715">
    <property type="entry name" value="SlyX"/>
    <property type="match status" value="1"/>
</dbReference>
<dbReference type="InterPro" id="IPR007236">
    <property type="entry name" value="SlyX"/>
</dbReference>
<dbReference type="NCBIfam" id="NF002750">
    <property type="entry name" value="PRK02793.1"/>
    <property type="match status" value="1"/>
</dbReference>
<dbReference type="PANTHER" id="PTHR36508">
    <property type="entry name" value="PROTEIN SLYX"/>
    <property type="match status" value="1"/>
</dbReference>
<dbReference type="PANTHER" id="PTHR36508:SF1">
    <property type="entry name" value="PROTEIN SLYX"/>
    <property type="match status" value="1"/>
</dbReference>
<dbReference type="Pfam" id="PF04102">
    <property type="entry name" value="SlyX"/>
    <property type="match status" value="1"/>
</dbReference>